<gene>
    <name type="primary">COS12</name>
    <name type="ordered locus">YGL263W</name>
    <name type="ORF">NRC380</name>
</gene>
<proteinExistence type="evidence at protein level"/>
<sequence length="380" mass="44804">MDGAKFENTVAFLPSEIFDCYNSTLPKNVFRSFVTWSCYEKFNSLEFRTWLLMWLPLIIAWKIRGKRHYLVIVTALMFEVLYFLWTYSYIFRERTLGKQVSQFAKEIITNTPGIDTEDWERVAVNFNSYLYENKLWNTEYFFFDGSSCQEAFRKMLLEPFSLKKNDFANAKVPDGSVCYTEKALQVYFTQIERKWHWINSEGFLHNKTTQSVQFSKHGYGSKLLWAFKEVTIMNSRFAFFSIAYLNGLLTIPRLRNSLHILYVCAVLSSMIIEYLIGIDKFRFKSMNLIHKLQFLSYITCGHEKSDATNWSQIAKRTNTYMFEQKIWNSPILFSDGIDCEKFFKWYFSTPVSSQASLSVGSTDFELWPYIKEAQSACNDV</sequence>
<dbReference type="EMBL" id="X94357">
    <property type="protein sequence ID" value="CAA64124.1"/>
    <property type="molecule type" value="Genomic_DNA"/>
</dbReference>
<dbReference type="EMBL" id="Z72785">
    <property type="protein sequence ID" value="CAA96983.1"/>
    <property type="molecule type" value="Genomic_DNA"/>
</dbReference>
<dbReference type="EMBL" id="BK006941">
    <property type="protein sequence ID" value="DAA07855.1"/>
    <property type="molecule type" value="Genomic_DNA"/>
</dbReference>
<dbReference type="PIR" id="S61598">
    <property type="entry name" value="S61598"/>
</dbReference>
<dbReference type="RefSeq" id="NP_011251.1">
    <property type="nucleotide sequence ID" value="NM_001181129.1"/>
</dbReference>
<dbReference type="BioGRID" id="33016">
    <property type="interactions" value="26"/>
</dbReference>
<dbReference type="DIP" id="DIP-5034N"/>
<dbReference type="FunCoup" id="P53053">
    <property type="interactions" value="60"/>
</dbReference>
<dbReference type="IntAct" id="P53053">
    <property type="interactions" value="2"/>
</dbReference>
<dbReference type="MINT" id="P53053"/>
<dbReference type="STRING" id="4932.YGL263W"/>
<dbReference type="PaxDb" id="4932-YGL263W"/>
<dbReference type="PeptideAtlas" id="P53053"/>
<dbReference type="EnsemblFungi" id="YGL263W_mRNA">
    <property type="protein sequence ID" value="YGL263W"/>
    <property type="gene ID" value="YGL263W"/>
</dbReference>
<dbReference type="GeneID" id="852628"/>
<dbReference type="KEGG" id="sce:YGL263W"/>
<dbReference type="AGR" id="SGD:S000003232"/>
<dbReference type="SGD" id="S000003232">
    <property type="gene designation" value="COS12"/>
</dbReference>
<dbReference type="VEuPathDB" id="FungiDB:YGL263W"/>
<dbReference type="eggNOG" id="ENOG502SAGH">
    <property type="taxonomic scope" value="Eukaryota"/>
</dbReference>
<dbReference type="GeneTree" id="ENSGT00940000176283"/>
<dbReference type="HOGENOM" id="CLU_062892_1_0_1"/>
<dbReference type="InParanoid" id="P53053"/>
<dbReference type="OMA" id="KWHWINS"/>
<dbReference type="OrthoDB" id="4037327at2759"/>
<dbReference type="BioCyc" id="YEAST:G3O-30731-MONOMER"/>
<dbReference type="BioGRID-ORCS" id="852628">
    <property type="hits" value="0 hits in 10 CRISPR screens"/>
</dbReference>
<dbReference type="PRO" id="PR:P53053"/>
<dbReference type="Proteomes" id="UP000002311">
    <property type="component" value="Chromosome VII"/>
</dbReference>
<dbReference type="RNAct" id="P53053">
    <property type="molecule type" value="protein"/>
</dbReference>
<dbReference type="GO" id="GO:0005768">
    <property type="term" value="C:endosome"/>
    <property type="evidence" value="ECO:0000250"/>
    <property type="project" value="SGD"/>
</dbReference>
<dbReference type="GO" id="GO:0000324">
    <property type="term" value="C:fungal-type vacuole"/>
    <property type="evidence" value="ECO:0007005"/>
    <property type="project" value="SGD"/>
</dbReference>
<dbReference type="GO" id="GO:0016020">
    <property type="term" value="C:membrane"/>
    <property type="evidence" value="ECO:0007669"/>
    <property type="project" value="UniProtKB-SubCell"/>
</dbReference>
<dbReference type="GO" id="GO:0043328">
    <property type="term" value="P:protein transport to vacuole involved in ubiquitin-dependent protein catabolic process via the multivesicular body sorting pathway"/>
    <property type="evidence" value="ECO:0000250"/>
    <property type="project" value="SGD"/>
</dbReference>
<dbReference type="InterPro" id="IPR001142">
    <property type="entry name" value="DUP/COS"/>
</dbReference>
<dbReference type="Pfam" id="PF00674">
    <property type="entry name" value="DUP"/>
    <property type="match status" value="2"/>
</dbReference>
<feature type="chain" id="PRO_0000207522" description="Protein COS12">
    <location>
        <begin position="1"/>
        <end position="380"/>
    </location>
</feature>
<feature type="topological domain" description="Cytoplasmic" evidence="1">
    <location>
        <begin position="1"/>
        <end position="70"/>
    </location>
</feature>
<feature type="transmembrane region" description="Helical" evidence="1">
    <location>
        <begin position="71"/>
        <end position="91"/>
    </location>
</feature>
<feature type="topological domain" description="Extracellular" evidence="1">
    <location>
        <begin position="92"/>
        <end position="231"/>
    </location>
</feature>
<feature type="transmembrane region" description="Helical" evidence="1">
    <location>
        <begin position="232"/>
        <end position="252"/>
    </location>
</feature>
<feature type="topological domain" description="Cytoplasmic" evidence="1">
    <location>
        <begin position="253"/>
        <end position="257"/>
    </location>
</feature>
<feature type="transmembrane region" description="Helical" evidence="1">
    <location>
        <begin position="258"/>
        <end position="278"/>
    </location>
</feature>
<feature type="topological domain" description="Extracellular" evidence="1">
    <location>
        <begin position="279"/>
        <end position="380"/>
    </location>
</feature>
<evidence type="ECO:0000255" key="1"/>
<evidence type="ECO:0000305" key="2"/>
<protein>
    <recommendedName>
        <fullName>Protein COS12</fullName>
    </recommendedName>
</protein>
<comment type="subcellular location">
    <subcellularLocation>
        <location>Membrane</location>
        <topology>Multi-pass membrane protein</topology>
    </subcellularLocation>
</comment>
<comment type="similarity">
    <text evidence="2">Belongs to the DUP/COS family.</text>
</comment>
<keyword id="KW-0472">Membrane</keyword>
<keyword id="KW-1185">Reference proteome</keyword>
<keyword id="KW-0812">Transmembrane</keyword>
<keyword id="KW-1133">Transmembrane helix</keyword>
<accession>P53053</accession>
<accession>D6VV71</accession>
<name>COS12_YEAST</name>
<reference key="1">
    <citation type="journal article" date="1996" name="Yeast">
        <title>Sequence of a 39,411 bp DNA fragment covering the left end of chromosome VII of Saccharomyces cerevisiae.</title>
        <authorList>
            <person name="Coissac E."/>
            <person name="Maillier E."/>
            <person name="Robineau S."/>
            <person name="Netter P."/>
        </authorList>
    </citation>
    <scope>NUCLEOTIDE SEQUENCE [GENOMIC DNA]</scope>
    <source>
        <strain>ATCC 96604 / S288c / FY1679</strain>
    </source>
</reference>
<reference key="2">
    <citation type="journal article" date="1997" name="Nature">
        <title>The nucleotide sequence of Saccharomyces cerevisiae chromosome VII.</title>
        <authorList>
            <person name="Tettelin H."/>
            <person name="Agostoni-Carbone M.L."/>
            <person name="Albermann K."/>
            <person name="Albers M."/>
            <person name="Arroyo J."/>
            <person name="Backes U."/>
            <person name="Barreiros T."/>
            <person name="Bertani I."/>
            <person name="Bjourson A.J."/>
            <person name="Brueckner M."/>
            <person name="Bruschi C.V."/>
            <person name="Carignani G."/>
            <person name="Castagnoli L."/>
            <person name="Cerdan E."/>
            <person name="Clemente M.L."/>
            <person name="Coblenz A."/>
            <person name="Coglievina M."/>
            <person name="Coissac E."/>
            <person name="Defoor E."/>
            <person name="Del Bino S."/>
            <person name="Delius H."/>
            <person name="Delneri D."/>
            <person name="de Wergifosse P."/>
            <person name="Dujon B."/>
            <person name="Durand P."/>
            <person name="Entian K.-D."/>
            <person name="Eraso P."/>
            <person name="Escribano V."/>
            <person name="Fabiani L."/>
            <person name="Fartmann B."/>
            <person name="Feroli F."/>
            <person name="Feuermann M."/>
            <person name="Frontali L."/>
            <person name="Garcia-Gonzalez M."/>
            <person name="Garcia-Saez M.I."/>
            <person name="Goffeau A."/>
            <person name="Guerreiro P."/>
            <person name="Hani J."/>
            <person name="Hansen M."/>
            <person name="Hebling U."/>
            <person name="Hernandez K."/>
            <person name="Heumann K."/>
            <person name="Hilger F."/>
            <person name="Hofmann B."/>
            <person name="Indge K.J."/>
            <person name="James C.M."/>
            <person name="Klima R."/>
            <person name="Koetter P."/>
            <person name="Kramer B."/>
            <person name="Kramer W."/>
            <person name="Lauquin G."/>
            <person name="Leuther H."/>
            <person name="Louis E.J."/>
            <person name="Maillier E."/>
            <person name="Marconi A."/>
            <person name="Martegani E."/>
            <person name="Mazon M.J."/>
            <person name="Mazzoni C."/>
            <person name="McReynolds A.D.K."/>
            <person name="Melchioretto P."/>
            <person name="Mewes H.-W."/>
            <person name="Minenkova O."/>
            <person name="Mueller-Auer S."/>
            <person name="Nawrocki A."/>
            <person name="Netter P."/>
            <person name="Neu R."/>
            <person name="Nombela C."/>
            <person name="Oliver S.G."/>
            <person name="Panzeri L."/>
            <person name="Paoluzi S."/>
            <person name="Plevani P."/>
            <person name="Portetelle D."/>
            <person name="Portillo F."/>
            <person name="Potier S."/>
            <person name="Purnelle B."/>
            <person name="Rieger M."/>
            <person name="Riles L."/>
            <person name="Rinaldi T."/>
            <person name="Robben J."/>
            <person name="Rodrigues-Pousada C."/>
            <person name="Rodriguez-Belmonte E."/>
            <person name="Rodriguez-Torres A.M."/>
            <person name="Rose M."/>
            <person name="Ruzzi M."/>
            <person name="Saliola M."/>
            <person name="Sanchez-Perez M."/>
            <person name="Schaefer B."/>
            <person name="Schaefer M."/>
            <person name="Scharfe M."/>
            <person name="Schmidheini T."/>
            <person name="Schreer A."/>
            <person name="Skala J."/>
            <person name="Souciet J.-L."/>
            <person name="Steensma H.Y."/>
            <person name="Talla E."/>
            <person name="Thierry A."/>
            <person name="Vandenbol M."/>
            <person name="van der Aart Q.J.M."/>
            <person name="Van Dyck L."/>
            <person name="Vanoni M."/>
            <person name="Verhasselt P."/>
            <person name="Voet M."/>
            <person name="Volckaert G."/>
            <person name="Wambutt R."/>
            <person name="Watson M.D."/>
            <person name="Weber N."/>
            <person name="Wedler E."/>
            <person name="Wedler H."/>
            <person name="Wipfli P."/>
            <person name="Wolf K."/>
            <person name="Wright L.F."/>
            <person name="Zaccaria P."/>
            <person name="Zimmermann M."/>
            <person name="Zollner A."/>
            <person name="Kleine K."/>
        </authorList>
    </citation>
    <scope>NUCLEOTIDE SEQUENCE [LARGE SCALE GENOMIC DNA]</scope>
    <source>
        <strain>ATCC 204508 / S288c</strain>
    </source>
</reference>
<reference key="3">
    <citation type="journal article" date="2014" name="G3 (Bethesda)">
        <title>The reference genome sequence of Saccharomyces cerevisiae: Then and now.</title>
        <authorList>
            <person name="Engel S.R."/>
            <person name="Dietrich F.S."/>
            <person name="Fisk D.G."/>
            <person name="Binkley G."/>
            <person name="Balakrishnan R."/>
            <person name="Costanzo M.C."/>
            <person name="Dwight S.S."/>
            <person name="Hitz B.C."/>
            <person name="Karra K."/>
            <person name="Nash R.S."/>
            <person name="Weng S."/>
            <person name="Wong E.D."/>
            <person name="Lloyd P."/>
            <person name="Skrzypek M.S."/>
            <person name="Miyasato S.R."/>
            <person name="Simison M."/>
            <person name="Cherry J.M."/>
        </authorList>
    </citation>
    <scope>GENOME REANNOTATION</scope>
    <source>
        <strain>ATCC 204508 / S288c</strain>
    </source>
</reference>
<reference key="4">
    <citation type="journal article" date="2006" name="Proc. Natl. Acad. Sci. U.S.A.">
        <title>A global topology map of the Saccharomyces cerevisiae membrane proteome.</title>
        <authorList>
            <person name="Kim H."/>
            <person name="Melen K."/>
            <person name="Oesterberg M."/>
            <person name="von Heijne G."/>
        </authorList>
    </citation>
    <scope>TOPOLOGY [LARGE SCALE ANALYSIS]</scope>
    <source>
        <strain>ATCC 208353 / W303-1A</strain>
    </source>
</reference>
<organism>
    <name type="scientific">Saccharomyces cerevisiae (strain ATCC 204508 / S288c)</name>
    <name type="common">Baker's yeast</name>
    <dbReference type="NCBI Taxonomy" id="559292"/>
    <lineage>
        <taxon>Eukaryota</taxon>
        <taxon>Fungi</taxon>
        <taxon>Dikarya</taxon>
        <taxon>Ascomycota</taxon>
        <taxon>Saccharomycotina</taxon>
        <taxon>Saccharomycetes</taxon>
        <taxon>Saccharomycetales</taxon>
        <taxon>Saccharomycetaceae</taxon>
        <taxon>Saccharomyces</taxon>
    </lineage>
</organism>